<evidence type="ECO:0000255" key="1"/>
<evidence type="ECO:0000269" key="2">
    <source>
    </source>
</evidence>
<evidence type="ECO:0000269" key="3">
    <source>
    </source>
</evidence>
<evidence type="ECO:0000269" key="4">
    <source>
    </source>
</evidence>
<evidence type="ECO:0000269" key="5">
    <source>
    </source>
</evidence>
<evidence type="ECO:0000303" key="6">
    <source>
    </source>
</evidence>
<evidence type="ECO:0000303" key="7">
    <source>
    </source>
</evidence>
<evidence type="ECO:0000305" key="8"/>
<evidence type="ECO:0007744" key="9">
    <source>
        <dbReference type="PDB" id="3J7Y"/>
    </source>
</evidence>
<evidence type="ECO:0007744" key="10">
    <source>
        <dbReference type="PDB" id="3J9M"/>
    </source>
</evidence>
<evidence type="ECO:0007744" key="11">
    <source>
        <dbReference type="PDB" id="5OOL"/>
    </source>
</evidence>
<evidence type="ECO:0007744" key="12">
    <source>
        <dbReference type="PDB" id="5OOM"/>
    </source>
</evidence>
<evidence type="ECO:0007744" key="13">
    <source>
        <dbReference type="PDB" id="7QH6"/>
    </source>
</evidence>
<evidence type="ECO:0007744" key="14">
    <source>
        <dbReference type="PDB" id="7QH7"/>
    </source>
</evidence>
<evidence type="ECO:0007829" key="15">
    <source>
        <dbReference type="PDB" id="7OF0"/>
    </source>
</evidence>
<comment type="subunit">
    <text evidence="2 3 4 5">Component of the mitochondrial large ribosomal subunit (mt-LSU) (PubMed:25278503, PubMed:25838379, PubMed:28892042, PubMed:35177605). Mature mammalian 55S mitochondrial ribosomes consist of a small (28S) and a large (39S) subunit. The 28S small subunit contains a 12S ribosomal RNA (12S mt-rRNA) and 30 different proteins. The 39S large subunit contains a 16S rRNA (16S mt-rRNA), a copy of mitochondrial valine transfer RNA (mt-tRNA(Val)), which plays an integral structural role, and 52 different proteins.</text>
</comment>
<comment type="subcellular location">
    <subcellularLocation>
        <location evidence="2 3 4">Mitochondrion</location>
    </subcellularLocation>
</comment>
<comment type="alternative products">
    <event type="alternative splicing"/>
    <isoform>
        <id>Q7Z2W9-1</id>
        <name>1</name>
        <sequence type="displayed"/>
    </isoform>
    <isoform>
        <id>Q7Z2W9-2</id>
        <name>2</name>
        <sequence type="described" ref="VSP_045633"/>
    </isoform>
</comment>
<comment type="similarity">
    <text evidence="8">Belongs to the bacterial ribosomal protein bL21 family.</text>
</comment>
<comment type="sequence caution" evidence="8">
    <conflict type="erroneous initiation">
        <sequence resource="EMBL-CDS" id="AAH55088"/>
    </conflict>
</comment>
<reference key="1">
    <citation type="journal article" date="2006" name="Nature">
        <title>Human chromosome 11 DNA sequence and analysis including novel gene identification.</title>
        <authorList>
            <person name="Taylor T.D."/>
            <person name="Noguchi H."/>
            <person name="Totoki Y."/>
            <person name="Toyoda A."/>
            <person name="Kuroki Y."/>
            <person name="Dewar K."/>
            <person name="Lloyd C."/>
            <person name="Itoh T."/>
            <person name="Takeda T."/>
            <person name="Kim D.-W."/>
            <person name="She X."/>
            <person name="Barlow K.F."/>
            <person name="Bloom T."/>
            <person name="Bruford E."/>
            <person name="Chang J.L."/>
            <person name="Cuomo C.A."/>
            <person name="Eichler E."/>
            <person name="FitzGerald M.G."/>
            <person name="Jaffe D.B."/>
            <person name="LaButti K."/>
            <person name="Nicol R."/>
            <person name="Park H.-S."/>
            <person name="Seaman C."/>
            <person name="Sougnez C."/>
            <person name="Yang X."/>
            <person name="Zimmer A.R."/>
            <person name="Zody M.C."/>
            <person name="Birren B.W."/>
            <person name="Nusbaum C."/>
            <person name="Fujiyama A."/>
            <person name="Hattori M."/>
            <person name="Rogers J."/>
            <person name="Lander E.S."/>
            <person name="Sakaki Y."/>
        </authorList>
    </citation>
    <scope>NUCLEOTIDE SEQUENCE [LARGE SCALE GENOMIC DNA]</scope>
</reference>
<reference key="2">
    <citation type="submission" date="2005-07" db="EMBL/GenBank/DDBJ databases">
        <authorList>
            <person name="Mural R.J."/>
            <person name="Istrail S."/>
            <person name="Sutton G."/>
            <person name="Florea L."/>
            <person name="Halpern A.L."/>
            <person name="Mobarry C.M."/>
            <person name="Lippert R."/>
            <person name="Walenz B."/>
            <person name="Shatkay H."/>
            <person name="Dew I."/>
            <person name="Miller J.R."/>
            <person name="Flanigan M.J."/>
            <person name="Edwards N.J."/>
            <person name="Bolanos R."/>
            <person name="Fasulo D."/>
            <person name="Halldorsson B.V."/>
            <person name="Hannenhalli S."/>
            <person name="Turner R."/>
            <person name="Yooseph S."/>
            <person name="Lu F."/>
            <person name="Nusskern D.R."/>
            <person name="Shue B.C."/>
            <person name="Zheng X.H."/>
            <person name="Zhong F."/>
            <person name="Delcher A.L."/>
            <person name="Huson D.H."/>
            <person name="Kravitz S.A."/>
            <person name="Mouchard L."/>
            <person name="Reinert K."/>
            <person name="Remington K.A."/>
            <person name="Clark A.G."/>
            <person name="Waterman M.S."/>
            <person name="Eichler E.E."/>
            <person name="Adams M.D."/>
            <person name="Hunkapiller M.W."/>
            <person name="Myers E.W."/>
            <person name="Venter J.C."/>
        </authorList>
    </citation>
    <scope>NUCLEOTIDE SEQUENCE [LARGE SCALE GENOMIC DNA]</scope>
</reference>
<reference key="3">
    <citation type="journal article" date="2004" name="Genome Res.">
        <title>The status, quality, and expansion of the NIH full-length cDNA project: the Mammalian Gene Collection (MGC).</title>
        <authorList>
            <consortium name="The MGC Project Team"/>
        </authorList>
    </citation>
    <scope>NUCLEOTIDE SEQUENCE [LARGE SCALE MRNA] (ISOFORMS 1 AND 2)</scope>
    <source>
        <tissue>Melanoma</tissue>
    </source>
</reference>
<reference key="4">
    <citation type="journal article" date="2011" name="BMC Syst. Biol.">
        <title>Initial characterization of the human central proteome.</title>
        <authorList>
            <person name="Burkard T.R."/>
            <person name="Planyavsky M."/>
            <person name="Kaupe I."/>
            <person name="Breitwieser F.P."/>
            <person name="Buerckstuemmer T."/>
            <person name="Bennett K.L."/>
            <person name="Superti-Furga G."/>
            <person name="Colinge J."/>
        </authorList>
    </citation>
    <scope>IDENTIFICATION BY MASS SPECTROMETRY [LARGE SCALE ANALYSIS]</scope>
</reference>
<reference key="5">
    <citation type="journal article" date="2015" name="Proteomics">
        <title>N-terminome analysis of the human mitochondrial proteome.</title>
        <authorList>
            <person name="Vaca Jacome A.S."/>
            <person name="Rabilloud T."/>
            <person name="Schaeffer-Reiss C."/>
            <person name="Rompais M."/>
            <person name="Ayoub D."/>
            <person name="Lane L."/>
            <person name="Bairoch A."/>
            <person name="Van Dorsselaer A."/>
            <person name="Carapito C."/>
        </authorList>
    </citation>
    <scope>IDENTIFICATION BY MASS SPECTROMETRY [LARGE SCALE ANALYSIS]</scope>
</reference>
<reference evidence="9" key="6">
    <citation type="journal article" date="2014" name="Science">
        <title>Structure of the large ribosomal subunit from human mitochondria.</title>
        <authorList>
            <person name="Brown A."/>
            <person name="Amunts A."/>
            <person name="Bai X.C."/>
            <person name="Sugimoto Y."/>
            <person name="Edwards P.C."/>
            <person name="Murshudov G."/>
            <person name="Scheres S.H."/>
            <person name="Ramakrishnan V."/>
        </authorList>
    </citation>
    <scope>STRUCTURE BY ELECTRON MICROSCOPY (3.40 ANGSTROMS)</scope>
    <scope>SUBCELLULAR LOCATION</scope>
    <scope>SUBUNIT</scope>
</reference>
<reference evidence="10" key="7">
    <citation type="journal article" date="2015" name="Science">
        <title>Ribosome. The structure of the human mitochondrial ribosome.</title>
        <authorList>
            <person name="Amunts A."/>
            <person name="Brown A."/>
            <person name="Toots J."/>
            <person name="Scheres S.H."/>
            <person name="Ramakrishnan V."/>
        </authorList>
    </citation>
    <scope>STRUCTURE BY ELECTRON MICROSCOPY (3.50 ANGSTROMS)</scope>
    <scope>SUBCELLULAR LOCATION</scope>
    <scope>SUBUNIT</scope>
</reference>
<reference evidence="11 12" key="8">
    <citation type="journal article" date="2017" name="Nat. Struct. Mol. Biol.">
        <title>Structures of the human mitochondrial ribosome in native states of assembly.</title>
        <authorList>
            <person name="Brown A."/>
            <person name="Rathore S."/>
            <person name="Kimanius D."/>
            <person name="Aibara S."/>
            <person name="Bai X.C."/>
            <person name="Rorbach J."/>
            <person name="Amunts A."/>
            <person name="Ramakrishnan V."/>
        </authorList>
    </citation>
    <scope>STRUCTURE BY ELECTRON MICROSCOPY (3.03 ANGSTROMS)</scope>
    <scope>SUBCELLULAR LOCATION</scope>
    <scope>SUBUNIT</scope>
</reference>
<reference evidence="13 14" key="9">
    <citation type="journal article" date="2022" name="Nat. Commun.">
        <title>A late-stage assembly checkpoint of the human mitochondrial ribosome large subunit.</title>
        <authorList>
            <person name="Rebelo-Guiomar P."/>
            <person name="Pellegrino S."/>
            <person name="Dent K.C."/>
            <person name="Sas-Chen A."/>
            <person name="Miller-Fleming L."/>
            <person name="Garone C."/>
            <person name="Van Haute L."/>
            <person name="Rogan J.F."/>
            <person name="Dinan A."/>
            <person name="Firth A.E."/>
            <person name="Andrews B."/>
            <person name="Whitworth A.J."/>
            <person name="Schwartz S."/>
            <person name="Warren A.J."/>
            <person name="Minczuk M."/>
        </authorList>
    </citation>
    <scope>STRUCTURE BY ELECTRON MICROSCOPY (2.9 ANGSTROMS) IN COMPLEX WITH MTLSU</scope>
    <scope>SUBUNIT</scope>
</reference>
<feature type="transit peptide" description="Mitochondrion" evidence="1">
    <location>
        <begin position="1"/>
        <end position="39"/>
    </location>
</feature>
<feature type="chain" id="PRO_0000252442" description="Large ribosomal subunit protein bL21m">
    <location>
        <begin position="40"/>
        <end position="205"/>
    </location>
</feature>
<feature type="splice variant" id="VSP_045633" description="In isoform 2." evidence="6">
    <location>
        <begin position="1"/>
        <end position="85"/>
    </location>
</feature>
<feature type="turn" evidence="15">
    <location>
        <begin position="55"/>
        <end position="57"/>
    </location>
</feature>
<feature type="helix" evidence="15">
    <location>
        <begin position="69"/>
        <end position="89"/>
    </location>
</feature>
<feature type="strand" evidence="15">
    <location>
        <begin position="96"/>
        <end position="101"/>
    </location>
</feature>
<feature type="strand" evidence="15">
    <location>
        <begin position="104"/>
        <end position="109"/>
    </location>
</feature>
<feature type="strand" evidence="15">
    <location>
        <begin position="113"/>
        <end position="118"/>
    </location>
</feature>
<feature type="strand" evidence="15">
    <location>
        <begin position="127"/>
        <end position="130"/>
    </location>
</feature>
<feature type="strand" evidence="15">
    <location>
        <begin position="133"/>
        <end position="137"/>
    </location>
</feature>
<feature type="strand" evidence="15">
    <location>
        <begin position="139"/>
        <end position="147"/>
    </location>
</feature>
<feature type="turn" evidence="15">
    <location>
        <begin position="151"/>
        <end position="153"/>
    </location>
</feature>
<feature type="strand" evidence="15">
    <location>
        <begin position="154"/>
        <end position="165"/>
    </location>
</feature>
<feature type="strand" evidence="15">
    <location>
        <begin position="169"/>
        <end position="175"/>
    </location>
</feature>
<feature type="turn" evidence="15">
    <location>
        <begin position="176"/>
        <end position="179"/>
    </location>
</feature>
<feature type="strand" evidence="15">
    <location>
        <begin position="180"/>
        <end position="186"/>
    </location>
</feature>
<feature type="strand" evidence="15">
    <location>
        <begin position="189"/>
        <end position="200"/>
    </location>
</feature>
<protein>
    <recommendedName>
        <fullName evidence="7">Large ribosomal subunit protein bL21m</fullName>
    </recommendedName>
    <alternativeName>
        <fullName>39S ribosomal protein L21, mitochondrial</fullName>
        <shortName>L21mt</shortName>
        <shortName>MRP-L21</shortName>
    </alternativeName>
</protein>
<accession>Q7Z2W9</accession>
<accession>A6NKU0</accession>
<accession>C9JPR2</accession>
<sequence length="205" mass="22815">MAASSLTVTLGRLASACSHSILRPSGPGAASLWSASRRFNSQSTSYLPGYVPKTSLSSPPWPEVVLPDPVEETRHHAEVVKKVNEMIVTGQYGRLFAVVHFASRQWKVTSEDLILIGNELDLACGERIRLEKVLLVGADNFTLLGKPLLGKDLVRVEATVIEKTESWPRIIMRFRKRKNFKKKRIVTTPQTVLRINSIEIAPCLL</sequence>
<organism>
    <name type="scientific">Homo sapiens</name>
    <name type="common">Human</name>
    <dbReference type="NCBI Taxonomy" id="9606"/>
    <lineage>
        <taxon>Eukaryota</taxon>
        <taxon>Metazoa</taxon>
        <taxon>Chordata</taxon>
        <taxon>Craniata</taxon>
        <taxon>Vertebrata</taxon>
        <taxon>Euteleostomi</taxon>
        <taxon>Mammalia</taxon>
        <taxon>Eutheria</taxon>
        <taxon>Euarchontoglires</taxon>
        <taxon>Primates</taxon>
        <taxon>Haplorrhini</taxon>
        <taxon>Catarrhini</taxon>
        <taxon>Hominidae</taxon>
        <taxon>Homo</taxon>
    </lineage>
</organism>
<name>RM21_HUMAN</name>
<keyword id="KW-0002">3D-structure</keyword>
<keyword id="KW-0025">Alternative splicing</keyword>
<keyword id="KW-0496">Mitochondrion</keyword>
<keyword id="KW-1267">Proteomics identification</keyword>
<keyword id="KW-1185">Reference proteome</keyword>
<keyword id="KW-0687">Ribonucleoprotein</keyword>
<keyword id="KW-0689">Ribosomal protein</keyword>
<keyword id="KW-0809">Transit peptide</keyword>
<gene>
    <name type="primary">MRPL21</name>
</gene>
<proteinExistence type="evidence at protein level"/>
<dbReference type="EMBL" id="AP000808">
    <property type="status" value="NOT_ANNOTATED_CDS"/>
    <property type="molecule type" value="Genomic_DNA"/>
</dbReference>
<dbReference type="EMBL" id="CH471076">
    <property type="protein sequence ID" value="EAW74724.1"/>
    <property type="molecule type" value="Genomic_DNA"/>
</dbReference>
<dbReference type="EMBL" id="BC055088">
    <property type="protein sequence ID" value="AAH55088.1"/>
    <property type="status" value="ALT_INIT"/>
    <property type="molecule type" value="mRNA"/>
</dbReference>
<dbReference type="EMBL" id="BM915440">
    <property type="status" value="NOT_ANNOTATED_CDS"/>
    <property type="molecule type" value="mRNA"/>
</dbReference>
<dbReference type="CCDS" id="CCDS44662.1">
    <molecule id="Q7Z2W9-2"/>
</dbReference>
<dbReference type="CCDS" id="CCDS8186.1">
    <molecule id="Q7Z2W9-1"/>
</dbReference>
<dbReference type="RefSeq" id="NP_852615.1">
    <molecule id="Q7Z2W9-1"/>
    <property type="nucleotide sequence ID" value="NM_181514.2"/>
</dbReference>
<dbReference type="RefSeq" id="NP_852616.1">
    <molecule id="Q7Z2W9-2"/>
    <property type="nucleotide sequence ID" value="NM_181515.2"/>
</dbReference>
<dbReference type="PDB" id="3J7Y">
    <property type="method" value="EM"/>
    <property type="resolution" value="3.40 A"/>
    <property type="chains" value="S=1-205"/>
</dbReference>
<dbReference type="PDB" id="3J9M">
    <property type="method" value="EM"/>
    <property type="resolution" value="3.50 A"/>
    <property type="chains" value="S=1-205"/>
</dbReference>
<dbReference type="PDB" id="5OOL">
    <property type="method" value="EM"/>
    <property type="resolution" value="3.06 A"/>
    <property type="chains" value="S=1-205"/>
</dbReference>
<dbReference type="PDB" id="5OOM">
    <property type="method" value="EM"/>
    <property type="resolution" value="3.03 A"/>
    <property type="chains" value="S=1-205"/>
</dbReference>
<dbReference type="PDB" id="6I9R">
    <property type="method" value="EM"/>
    <property type="resolution" value="3.90 A"/>
    <property type="chains" value="S=1-205"/>
</dbReference>
<dbReference type="PDB" id="6NU2">
    <property type="method" value="EM"/>
    <property type="resolution" value="3.90 A"/>
    <property type="chains" value="S=49-204"/>
</dbReference>
<dbReference type="PDB" id="6NU3">
    <property type="method" value="EM"/>
    <property type="resolution" value="4.40 A"/>
    <property type="chains" value="S=1-205"/>
</dbReference>
<dbReference type="PDB" id="6VLZ">
    <property type="method" value="EM"/>
    <property type="resolution" value="2.97 A"/>
    <property type="chains" value="S=1-205"/>
</dbReference>
<dbReference type="PDB" id="6VMI">
    <property type="method" value="EM"/>
    <property type="resolution" value="2.96 A"/>
    <property type="chains" value="S=1-205"/>
</dbReference>
<dbReference type="PDB" id="6ZM5">
    <property type="method" value="EM"/>
    <property type="resolution" value="2.89 A"/>
    <property type="chains" value="S=1-205"/>
</dbReference>
<dbReference type="PDB" id="6ZM6">
    <property type="method" value="EM"/>
    <property type="resolution" value="2.59 A"/>
    <property type="chains" value="S=1-205"/>
</dbReference>
<dbReference type="PDB" id="6ZS9">
    <property type="method" value="EM"/>
    <property type="resolution" value="4.00 A"/>
    <property type="chains" value="XS=1-205"/>
</dbReference>
<dbReference type="PDB" id="6ZSA">
    <property type="method" value="EM"/>
    <property type="resolution" value="4.00 A"/>
    <property type="chains" value="XS=1-205"/>
</dbReference>
<dbReference type="PDB" id="6ZSB">
    <property type="method" value="EM"/>
    <property type="resolution" value="4.50 A"/>
    <property type="chains" value="XS=1-205"/>
</dbReference>
<dbReference type="PDB" id="6ZSC">
    <property type="method" value="EM"/>
    <property type="resolution" value="3.50 A"/>
    <property type="chains" value="XS=1-205"/>
</dbReference>
<dbReference type="PDB" id="6ZSD">
    <property type="method" value="EM"/>
    <property type="resolution" value="3.70 A"/>
    <property type="chains" value="XS=1-205"/>
</dbReference>
<dbReference type="PDB" id="6ZSE">
    <property type="method" value="EM"/>
    <property type="resolution" value="5.00 A"/>
    <property type="chains" value="XS=1-205"/>
</dbReference>
<dbReference type="PDB" id="6ZSG">
    <property type="method" value="EM"/>
    <property type="resolution" value="4.00 A"/>
    <property type="chains" value="XS=1-205"/>
</dbReference>
<dbReference type="PDB" id="7A5F">
    <property type="method" value="EM"/>
    <property type="resolution" value="4.40 A"/>
    <property type="chains" value="S3=1-205"/>
</dbReference>
<dbReference type="PDB" id="7A5G">
    <property type="method" value="EM"/>
    <property type="resolution" value="4.33 A"/>
    <property type="chains" value="S3=1-205"/>
</dbReference>
<dbReference type="PDB" id="7A5H">
    <property type="method" value="EM"/>
    <property type="resolution" value="3.30 A"/>
    <property type="chains" value="S=1-205"/>
</dbReference>
<dbReference type="PDB" id="7A5I">
    <property type="method" value="EM"/>
    <property type="resolution" value="3.70 A"/>
    <property type="chains" value="S3=1-205"/>
</dbReference>
<dbReference type="PDB" id="7A5J">
    <property type="method" value="EM"/>
    <property type="resolution" value="3.10 A"/>
    <property type="chains" value="S=1-205"/>
</dbReference>
<dbReference type="PDB" id="7A5K">
    <property type="method" value="EM"/>
    <property type="resolution" value="3.70 A"/>
    <property type="chains" value="S3=1-205"/>
</dbReference>
<dbReference type="PDB" id="7L08">
    <property type="method" value="EM"/>
    <property type="resolution" value="3.49 A"/>
    <property type="chains" value="S=1-205"/>
</dbReference>
<dbReference type="PDB" id="7L20">
    <property type="method" value="EM"/>
    <property type="resolution" value="3.15 A"/>
    <property type="chains" value="S=1-205"/>
</dbReference>
<dbReference type="PDB" id="7O9K">
    <property type="method" value="EM"/>
    <property type="resolution" value="3.10 A"/>
    <property type="chains" value="S=1-205"/>
</dbReference>
<dbReference type="PDB" id="7O9M">
    <property type="method" value="EM"/>
    <property type="resolution" value="2.50 A"/>
    <property type="chains" value="S=1-205"/>
</dbReference>
<dbReference type="PDB" id="7ODR">
    <property type="method" value="EM"/>
    <property type="resolution" value="2.90 A"/>
    <property type="chains" value="S=1-205"/>
</dbReference>
<dbReference type="PDB" id="7ODS">
    <property type="method" value="EM"/>
    <property type="resolution" value="3.10 A"/>
    <property type="chains" value="S=1-205"/>
</dbReference>
<dbReference type="PDB" id="7ODT">
    <property type="method" value="EM"/>
    <property type="resolution" value="3.10 A"/>
    <property type="chains" value="S=1-205"/>
</dbReference>
<dbReference type="PDB" id="7OF0">
    <property type="method" value="EM"/>
    <property type="resolution" value="2.20 A"/>
    <property type="chains" value="S=1-205"/>
</dbReference>
<dbReference type="PDB" id="7OF2">
    <property type="method" value="EM"/>
    <property type="resolution" value="2.70 A"/>
    <property type="chains" value="S=1-205"/>
</dbReference>
<dbReference type="PDB" id="7OF3">
    <property type="method" value="EM"/>
    <property type="resolution" value="2.70 A"/>
    <property type="chains" value="S=1-205"/>
</dbReference>
<dbReference type="PDB" id="7OF4">
    <property type="method" value="EM"/>
    <property type="resolution" value="2.70 A"/>
    <property type="chains" value="S=1-205"/>
</dbReference>
<dbReference type="PDB" id="7OF5">
    <property type="method" value="EM"/>
    <property type="resolution" value="2.90 A"/>
    <property type="chains" value="S=1-205"/>
</dbReference>
<dbReference type="PDB" id="7OF6">
    <property type="method" value="EM"/>
    <property type="resolution" value="2.60 A"/>
    <property type="chains" value="S=1-205"/>
</dbReference>
<dbReference type="PDB" id="7OF7">
    <property type="method" value="EM"/>
    <property type="resolution" value="2.50 A"/>
    <property type="chains" value="S=1-205"/>
</dbReference>
<dbReference type="PDB" id="7OG4">
    <property type="method" value="EM"/>
    <property type="resolution" value="3.80 A"/>
    <property type="chains" value="XS=1-205"/>
</dbReference>
<dbReference type="PDB" id="7OI6">
    <property type="method" value="EM"/>
    <property type="resolution" value="5.70 A"/>
    <property type="chains" value="S=1-205"/>
</dbReference>
<dbReference type="PDB" id="7OI7">
    <property type="method" value="EM"/>
    <property type="resolution" value="3.50 A"/>
    <property type="chains" value="S=1-205"/>
</dbReference>
<dbReference type="PDB" id="7OI8">
    <property type="method" value="EM"/>
    <property type="resolution" value="3.50 A"/>
    <property type="chains" value="S=1-205"/>
</dbReference>
<dbReference type="PDB" id="7OI9">
    <property type="method" value="EM"/>
    <property type="resolution" value="3.30 A"/>
    <property type="chains" value="S=1-205"/>
</dbReference>
<dbReference type="PDB" id="7OIA">
    <property type="method" value="EM"/>
    <property type="resolution" value="3.20 A"/>
    <property type="chains" value="S=1-205"/>
</dbReference>
<dbReference type="PDB" id="7OIB">
    <property type="method" value="EM"/>
    <property type="resolution" value="3.30 A"/>
    <property type="chains" value="S=1-205"/>
</dbReference>
<dbReference type="PDB" id="7OIC">
    <property type="method" value="EM"/>
    <property type="resolution" value="3.10 A"/>
    <property type="chains" value="S=1-205"/>
</dbReference>
<dbReference type="PDB" id="7OID">
    <property type="method" value="EM"/>
    <property type="resolution" value="3.70 A"/>
    <property type="chains" value="S=1-205"/>
</dbReference>
<dbReference type="PDB" id="7OIE">
    <property type="method" value="EM"/>
    <property type="resolution" value="3.50 A"/>
    <property type="chains" value="S=1-205"/>
</dbReference>
<dbReference type="PDB" id="7PD3">
    <property type="method" value="EM"/>
    <property type="resolution" value="3.40 A"/>
    <property type="chains" value="S=1-205"/>
</dbReference>
<dbReference type="PDB" id="7PO4">
    <property type="method" value="EM"/>
    <property type="resolution" value="2.56 A"/>
    <property type="chains" value="S=1-205"/>
</dbReference>
<dbReference type="PDB" id="7QH6">
    <property type="method" value="EM"/>
    <property type="resolution" value="3.08 A"/>
    <property type="chains" value="S=1-205"/>
</dbReference>
<dbReference type="PDB" id="7QH7">
    <property type="method" value="EM"/>
    <property type="resolution" value="2.89 A"/>
    <property type="chains" value="S=49-204"/>
</dbReference>
<dbReference type="PDB" id="7QI4">
    <property type="method" value="EM"/>
    <property type="resolution" value="2.21 A"/>
    <property type="chains" value="S=1-205"/>
</dbReference>
<dbReference type="PDB" id="7QI5">
    <property type="method" value="EM"/>
    <property type="resolution" value="2.63 A"/>
    <property type="chains" value="S=1-205"/>
</dbReference>
<dbReference type="PDB" id="7QI6">
    <property type="method" value="EM"/>
    <property type="resolution" value="2.98 A"/>
    <property type="chains" value="S=1-205"/>
</dbReference>
<dbReference type="PDB" id="8ANY">
    <property type="method" value="EM"/>
    <property type="resolution" value="2.85 A"/>
    <property type="chains" value="S=1-205"/>
</dbReference>
<dbReference type="PDB" id="8K2A">
    <property type="method" value="EM"/>
    <property type="resolution" value="2.90 A"/>
    <property type="chains" value="LU=1-205"/>
</dbReference>
<dbReference type="PDB" id="8K2B">
    <property type="method" value="EM"/>
    <property type="resolution" value="3.40 A"/>
    <property type="chains" value="LU=1-205"/>
</dbReference>
<dbReference type="PDB" id="8OIR">
    <property type="method" value="EM"/>
    <property type="resolution" value="3.10 A"/>
    <property type="chains" value="BZ=1-205"/>
</dbReference>
<dbReference type="PDB" id="8OIT">
    <property type="method" value="EM"/>
    <property type="resolution" value="2.90 A"/>
    <property type="chains" value="BZ=1-205"/>
</dbReference>
<dbReference type="PDB" id="8PK0">
    <property type="method" value="EM"/>
    <property type="resolution" value="3.03 A"/>
    <property type="chains" value="S=1-205"/>
</dbReference>
<dbReference type="PDB" id="8QSJ">
    <property type="method" value="EM"/>
    <property type="resolution" value="3.00 A"/>
    <property type="chains" value="S=1-205"/>
</dbReference>
<dbReference type="PDB" id="8QU1">
    <property type="method" value="EM"/>
    <property type="resolution" value="2.74 A"/>
    <property type="chains" value="S=1-205"/>
</dbReference>
<dbReference type="PDB" id="8QU5">
    <property type="method" value="EM"/>
    <property type="resolution" value="2.42 A"/>
    <property type="chains" value="S=1-205"/>
</dbReference>
<dbReference type="PDB" id="8RRI">
    <property type="method" value="EM"/>
    <property type="resolution" value="2.40 A"/>
    <property type="chains" value="S=1-205"/>
</dbReference>
<dbReference type="PDB" id="8XT0">
    <property type="method" value="EM"/>
    <property type="resolution" value="3.20 A"/>
    <property type="chains" value="LU=1-205"/>
</dbReference>
<dbReference type="PDB" id="8XT1">
    <property type="method" value="EM"/>
    <property type="resolution" value="3.10 A"/>
    <property type="chains" value="LU=1-205"/>
</dbReference>
<dbReference type="PDB" id="8XT2">
    <property type="method" value="EM"/>
    <property type="resolution" value="3.30 A"/>
    <property type="chains" value="LU=1-205"/>
</dbReference>
<dbReference type="PDB" id="8XT3">
    <property type="method" value="EM"/>
    <property type="resolution" value="3.10 A"/>
    <property type="chains" value="LU=1-205"/>
</dbReference>
<dbReference type="PDBsum" id="3J7Y"/>
<dbReference type="PDBsum" id="3J9M"/>
<dbReference type="PDBsum" id="5OOL"/>
<dbReference type="PDBsum" id="5OOM"/>
<dbReference type="PDBsum" id="6I9R"/>
<dbReference type="PDBsum" id="6NU2"/>
<dbReference type="PDBsum" id="6NU3"/>
<dbReference type="PDBsum" id="6VLZ"/>
<dbReference type="PDBsum" id="6VMI"/>
<dbReference type="PDBsum" id="6ZM5"/>
<dbReference type="PDBsum" id="6ZM6"/>
<dbReference type="PDBsum" id="6ZS9"/>
<dbReference type="PDBsum" id="6ZSA"/>
<dbReference type="PDBsum" id="6ZSB"/>
<dbReference type="PDBsum" id="6ZSC"/>
<dbReference type="PDBsum" id="6ZSD"/>
<dbReference type="PDBsum" id="6ZSE"/>
<dbReference type="PDBsum" id="6ZSG"/>
<dbReference type="PDBsum" id="7A5F"/>
<dbReference type="PDBsum" id="7A5G"/>
<dbReference type="PDBsum" id="7A5H"/>
<dbReference type="PDBsum" id="7A5I"/>
<dbReference type="PDBsum" id="7A5J"/>
<dbReference type="PDBsum" id="7A5K"/>
<dbReference type="PDBsum" id="7L08"/>
<dbReference type="PDBsum" id="7L20"/>
<dbReference type="PDBsum" id="7O9K"/>
<dbReference type="PDBsum" id="7O9M"/>
<dbReference type="PDBsum" id="7ODR"/>
<dbReference type="PDBsum" id="7ODS"/>
<dbReference type="PDBsum" id="7ODT"/>
<dbReference type="PDBsum" id="7OF0"/>
<dbReference type="PDBsum" id="7OF2"/>
<dbReference type="PDBsum" id="7OF3"/>
<dbReference type="PDBsum" id="7OF4"/>
<dbReference type="PDBsum" id="7OF5"/>
<dbReference type="PDBsum" id="7OF6"/>
<dbReference type="PDBsum" id="7OF7"/>
<dbReference type="PDBsum" id="7OG4"/>
<dbReference type="PDBsum" id="7OI6"/>
<dbReference type="PDBsum" id="7OI7"/>
<dbReference type="PDBsum" id="7OI8"/>
<dbReference type="PDBsum" id="7OI9"/>
<dbReference type="PDBsum" id="7OIA"/>
<dbReference type="PDBsum" id="7OIB"/>
<dbReference type="PDBsum" id="7OIC"/>
<dbReference type="PDBsum" id="7OID"/>
<dbReference type="PDBsum" id="7OIE"/>
<dbReference type="PDBsum" id="7PD3"/>
<dbReference type="PDBsum" id="7PO4"/>
<dbReference type="PDBsum" id="7QH6"/>
<dbReference type="PDBsum" id="7QH7"/>
<dbReference type="PDBsum" id="7QI4"/>
<dbReference type="PDBsum" id="7QI5"/>
<dbReference type="PDBsum" id="7QI6"/>
<dbReference type="PDBsum" id="8ANY"/>
<dbReference type="PDBsum" id="8K2A"/>
<dbReference type="PDBsum" id="8K2B"/>
<dbReference type="PDBsum" id="8OIR"/>
<dbReference type="PDBsum" id="8OIT"/>
<dbReference type="PDBsum" id="8PK0"/>
<dbReference type="PDBsum" id="8QSJ"/>
<dbReference type="PDBsum" id="8QU1"/>
<dbReference type="PDBsum" id="8QU5"/>
<dbReference type="PDBsum" id="8RRI"/>
<dbReference type="PDBsum" id="8XT0"/>
<dbReference type="PDBsum" id="8XT1"/>
<dbReference type="PDBsum" id="8XT2"/>
<dbReference type="PDBsum" id="8XT3"/>
<dbReference type="EMDB" id="EMD-0514"/>
<dbReference type="EMDB" id="EMD-0515"/>
<dbReference type="EMDB" id="EMD-11278"/>
<dbReference type="EMDB" id="EMD-11279"/>
<dbReference type="EMDB" id="EMD-11390"/>
<dbReference type="EMDB" id="EMD-11391"/>
<dbReference type="EMDB" id="EMD-11392"/>
<dbReference type="EMDB" id="EMD-11393"/>
<dbReference type="EMDB" id="EMD-11394"/>
<dbReference type="EMDB" id="EMD-11395"/>
<dbReference type="EMDB" id="EMD-11397"/>
<dbReference type="EMDB" id="EMD-11641"/>
<dbReference type="EMDB" id="EMD-11642"/>
<dbReference type="EMDB" id="EMD-11643"/>
<dbReference type="EMDB" id="EMD-11644"/>
<dbReference type="EMDB" id="EMD-11645"/>
<dbReference type="EMDB" id="EMD-11646"/>
<dbReference type="EMDB" id="EMD-12763"/>
<dbReference type="EMDB" id="EMD-12764"/>
<dbReference type="EMDB" id="EMD-12845"/>
<dbReference type="EMDB" id="EMD-12846"/>
<dbReference type="EMDB" id="EMD-12847"/>
<dbReference type="EMDB" id="EMD-12865"/>
<dbReference type="EMDB" id="EMD-12867"/>
<dbReference type="EMDB" id="EMD-12868"/>
<dbReference type="EMDB" id="EMD-12869"/>
<dbReference type="EMDB" id="EMD-12870"/>
<dbReference type="EMDB" id="EMD-12871"/>
<dbReference type="EMDB" id="EMD-12872"/>
<dbReference type="EMDB" id="EMD-12877"/>
<dbReference type="EMDB" id="EMD-12919"/>
<dbReference type="EMDB" id="EMD-12920"/>
<dbReference type="EMDB" id="EMD-12921"/>
<dbReference type="EMDB" id="EMD-12922"/>
<dbReference type="EMDB" id="EMD-12923"/>
<dbReference type="EMDB" id="EMD-12924"/>
<dbReference type="EMDB" id="EMD-12925"/>
<dbReference type="EMDB" id="EMD-12926"/>
<dbReference type="EMDB" id="EMD-12927"/>
<dbReference type="EMDB" id="EMD-13329"/>
<dbReference type="EMDB" id="EMD-13562"/>
<dbReference type="EMDB" id="EMD-13965"/>
<dbReference type="EMDB" id="EMD-13967"/>
<dbReference type="EMDB" id="EMD-13980"/>
<dbReference type="EMDB" id="EMD-13981"/>
<dbReference type="EMDB" id="EMD-13982"/>
<dbReference type="EMDB" id="EMD-15544"/>
<dbReference type="EMDB" id="EMD-16897"/>
<dbReference type="EMDB" id="EMD-16899"/>
<dbReference type="EMDB" id="EMD-17719"/>
<dbReference type="EMDB" id="EMD-19460"/>
<dbReference type="EMDB" id="EMD-21233"/>
<dbReference type="EMDB" id="EMD-21242"/>
<dbReference type="EMDB" id="EMD-23096"/>
<dbReference type="EMDB" id="EMD-23121"/>
<dbReference type="EMDB" id="EMD-36836"/>
<dbReference type="EMDB" id="EMD-36837"/>
<dbReference type="EMDB" id="EMD-3842"/>
<dbReference type="EMDB" id="EMD-3843"/>
<dbReference type="EMDB" id="EMD-38632"/>
<dbReference type="EMDB" id="EMD-38633"/>
<dbReference type="EMDB" id="EMD-38634"/>
<dbReference type="EMDB" id="EMD-38635"/>
<dbReference type="EMDB" id="EMD-4434"/>
<dbReference type="SMR" id="Q7Z2W9"/>
<dbReference type="BioGRID" id="128594">
    <property type="interactions" value="195"/>
</dbReference>
<dbReference type="ComplexPortal" id="CPX-5226">
    <property type="entry name" value="39S mitochondrial large ribosomal subunit"/>
</dbReference>
<dbReference type="CORUM" id="Q7Z2W9"/>
<dbReference type="FunCoup" id="Q7Z2W9">
    <property type="interactions" value="1443"/>
</dbReference>
<dbReference type="IntAct" id="Q7Z2W9">
    <property type="interactions" value="92"/>
</dbReference>
<dbReference type="MINT" id="Q7Z2W9"/>
<dbReference type="STRING" id="9606.ENSP00000354580"/>
<dbReference type="iPTMnet" id="Q7Z2W9"/>
<dbReference type="PhosphoSitePlus" id="Q7Z2W9"/>
<dbReference type="SwissPalm" id="Q7Z2W9"/>
<dbReference type="BioMuta" id="MRPL21"/>
<dbReference type="DMDM" id="229462820"/>
<dbReference type="jPOST" id="Q7Z2W9"/>
<dbReference type="MassIVE" id="Q7Z2W9"/>
<dbReference type="PaxDb" id="9606-ENSP00000354580"/>
<dbReference type="PeptideAtlas" id="Q7Z2W9"/>
<dbReference type="ProteomicsDB" id="11149"/>
<dbReference type="ProteomicsDB" id="68979">
    <molecule id="Q7Z2W9-1"/>
</dbReference>
<dbReference type="Pumba" id="Q7Z2W9"/>
<dbReference type="Antibodypedia" id="30611">
    <property type="antibodies" value="138 antibodies from 22 providers"/>
</dbReference>
<dbReference type="DNASU" id="219927"/>
<dbReference type="Ensembl" id="ENST00000362034.7">
    <molecule id="Q7Z2W9-1"/>
    <property type="protein sequence ID" value="ENSP00000354580.2"/>
    <property type="gene ID" value="ENSG00000197345.13"/>
</dbReference>
<dbReference type="Ensembl" id="ENST00000450904.6">
    <molecule id="Q7Z2W9-2"/>
    <property type="protein sequence ID" value="ENSP00000389400.2"/>
    <property type="gene ID" value="ENSG00000197345.13"/>
</dbReference>
<dbReference type="GeneID" id="219927"/>
<dbReference type="KEGG" id="hsa:219927"/>
<dbReference type="MANE-Select" id="ENST00000362034.7">
    <property type="protein sequence ID" value="ENSP00000354580.2"/>
    <property type="RefSeq nucleotide sequence ID" value="NM_181514.2"/>
    <property type="RefSeq protein sequence ID" value="NP_852615.1"/>
</dbReference>
<dbReference type="UCSC" id="uc001ooh.4">
    <molecule id="Q7Z2W9-1"/>
    <property type="organism name" value="human"/>
</dbReference>
<dbReference type="AGR" id="HGNC:14479"/>
<dbReference type="CTD" id="219927"/>
<dbReference type="DisGeNET" id="219927"/>
<dbReference type="GeneCards" id="MRPL21"/>
<dbReference type="HGNC" id="HGNC:14479">
    <property type="gene designation" value="MRPL21"/>
</dbReference>
<dbReference type="HPA" id="ENSG00000197345">
    <property type="expression patterns" value="Low tissue specificity"/>
</dbReference>
<dbReference type="MIM" id="611834">
    <property type="type" value="gene"/>
</dbReference>
<dbReference type="neXtProt" id="NX_Q7Z2W9"/>
<dbReference type="OpenTargets" id="ENSG00000197345"/>
<dbReference type="PharmGKB" id="PA30951"/>
<dbReference type="VEuPathDB" id="HostDB:ENSG00000197345"/>
<dbReference type="eggNOG" id="KOG1686">
    <property type="taxonomic scope" value="Eukaryota"/>
</dbReference>
<dbReference type="GeneTree" id="ENSGT00390000005535"/>
<dbReference type="HOGENOM" id="CLU_061463_5_2_1"/>
<dbReference type="InParanoid" id="Q7Z2W9"/>
<dbReference type="OMA" id="QWKVTDE"/>
<dbReference type="OrthoDB" id="5994at2759"/>
<dbReference type="PAN-GO" id="Q7Z2W9">
    <property type="GO annotations" value="2 GO annotations based on evolutionary models"/>
</dbReference>
<dbReference type="PhylomeDB" id="Q7Z2W9"/>
<dbReference type="TreeFam" id="TF324867"/>
<dbReference type="PathwayCommons" id="Q7Z2W9"/>
<dbReference type="Reactome" id="R-HSA-5368286">
    <property type="pathway name" value="Mitochondrial translation initiation"/>
</dbReference>
<dbReference type="Reactome" id="R-HSA-5389840">
    <property type="pathway name" value="Mitochondrial translation elongation"/>
</dbReference>
<dbReference type="Reactome" id="R-HSA-5419276">
    <property type="pathway name" value="Mitochondrial translation termination"/>
</dbReference>
<dbReference type="SignaLink" id="Q7Z2W9"/>
<dbReference type="SIGNOR" id="Q7Z2W9"/>
<dbReference type="BioGRID-ORCS" id="219927">
    <property type="hits" value="545 hits in 1176 CRISPR screens"/>
</dbReference>
<dbReference type="ChiTaRS" id="MRPL21">
    <property type="organism name" value="human"/>
</dbReference>
<dbReference type="GenomeRNAi" id="219927"/>
<dbReference type="Pharos" id="Q7Z2W9">
    <property type="development level" value="Tdark"/>
</dbReference>
<dbReference type="PRO" id="PR:Q7Z2W9"/>
<dbReference type="Proteomes" id="UP000005640">
    <property type="component" value="Chromosome 11"/>
</dbReference>
<dbReference type="RNAct" id="Q7Z2W9">
    <property type="molecule type" value="protein"/>
</dbReference>
<dbReference type="Bgee" id="ENSG00000197345">
    <property type="expression patterns" value="Expressed in left ventricle myocardium and 176 other cell types or tissues"/>
</dbReference>
<dbReference type="ExpressionAtlas" id="Q7Z2W9">
    <property type="expression patterns" value="baseline and differential"/>
</dbReference>
<dbReference type="GO" id="GO:0005743">
    <property type="term" value="C:mitochondrial inner membrane"/>
    <property type="evidence" value="ECO:0000304"/>
    <property type="project" value="Reactome"/>
</dbReference>
<dbReference type="GO" id="GO:0005762">
    <property type="term" value="C:mitochondrial large ribosomal subunit"/>
    <property type="evidence" value="ECO:0000314"/>
    <property type="project" value="UniProtKB"/>
</dbReference>
<dbReference type="GO" id="GO:0005739">
    <property type="term" value="C:mitochondrion"/>
    <property type="evidence" value="ECO:0000314"/>
    <property type="project" value="UniProtKB"/>
</dbReference>
<dbReference type="GO" id="GO:0003723">
    <property type="term" value="F:RNA binding"/>
    <property type="evidence" value="ECO:0007005"/>
    <property type="project" value="UniProtKB"/>
</dbReference>
<dbReference type="GO" id="GO:0003735">
    <property type="term" value="F:structural constituent of ribosome"/>
    <property type="evidence" value="ECO:0000318"/>
    <property type="project" value="GO_Central"/>
</dbReference>
<dbReference type="GO" id="GO:0032543">
    <property type="term" value="P:mitochondrial translation"/>
    <property type="evidence" value="ECO:0000303"/>
    <property type="project" value="ComplexPortal"/>
</dbReference>
<dbReference type="InterPro" id="IPR028909">
    <property type="entry name" value="bL21-like"/>
</dbReference>
<dbReference type="InterPro" id="IPR036164">
    <property type="entry name" value="bL21-like_sf"/>
</dbReference>
<dbReference type="InterPro" id="IPR001787">
    <property type="entry name" value="Ribosomal_bL21"/>
</dbReference>
<dbReference type="NCBIfam" id="TIGR00061">
    <property type="entry name" value="L21"/>
    <property type="match status" value="1"/>
</dbReference>
<dbReference type="PANTHER" id="PTHR21349">
    <property type="entry name" value="50S RIBOSOMAL PROTEIN L21"/>
    <property type="match status" value="1"/>
</dbReference>
<dbReference type="PANTHER" id="PTHR21349:SF0">
    <property type="entry name" value="LARGE RIBOSOMAL SUBUNIT PROTEIN BL21M"/>
    <property type="match status" value="1"/>
</dbReference>
<dbReference type="Pfam" id="PF00829">
    <property type="entry name" value="Ribosomal_L21p"/>
    <property type="match status" value="1"/>
</dbReference>
<dbReference type="SUPFAM" id="SSF141091">
    <property type="entry name" value="L21p-like"/>
    <property type="match status" value="1"/>
</dbReference>